<feature type="chain" id="PRO_0000195147" description="Dynein light chain 1, cytoplasmic">
    <location>
        <begin position="1"/>
        <end position="87"/>
    </location>
</feature>
<protein>
    <recommendedName>
        <fullName>Dynein light chain 1, cytoplasmic</fullName>
    </recommendedName>
</protein>
<name>DYL1_KLULA</name>
<gene>
    <name type="primary">DYN2</name>
    <name type="ordered locus">KLLA0B00781g</name>
</gene>
<dbReference type="EMBL" id="CR382122">
    <property type="protein sequence ID" value="CAH01958.1"/>
    <property type="molecule type" value="Genomic_DNA"/>
</dbReference>
<dbReference type="RefSeq" id="XP_451565.1">
    <property type="nucleotide sequence ID" value="XM_451565.1"/>
</dbReference>
<dbReference type="SMR" id="Q6CWX4"/>
<dbReference type="FunCoup" id="Q6CWX4">
    <property type="interactions" value="722"/>
</dbReference>
<dbReference type="STRING" id="284590.Q6CWX4"/>
<dbReference type="PaxDb" id="284590-Q6CWX4"/>
<dbReference type="KEGG" id="kla:KLLA0_B00781g"/>
<dbReference type="eggNOG" id="KOG3430">
    <property type="taxonomic scope" value="Eukaryota"/>
</dbReference>
<dbReference type="HOGENOM" id="CLU_070944_4_0_1"/>
<dbReference type="InParanoid" id="Q6CWX4"/>
<dbReference type="OMA" id="THEKGHF"/>
<dbReference type="Proteomes" id="UP000000598">
    <property type="component" value="Chromosome B"/>
</dbReference>
<dbReference type="GO" id="GO:0005737">
    <property type="term" value="C:cytoplasm"/>
    <property type="evidence" value="ECO:0007669"/>
    <property type="project" value="UniProtKB-KW"/>
</dbReference>
<dbReference type="GO" id="GO:0005868">
    <property type="term" value="C:cytoplasmic dynein complex"/>
    <property type="evidence" value="ECO:0007669"/>
    <property type="project" value="TreeGrafter"/>
</dbReference>
<dbReference type="GO" id="GO:0005874">
    <property type="term" value="C:microtubule"/>
    <property type="evidence" value="ECO:0007669"/>
    <property type="project" value="UniProtKB-KW"/>
</dbReference>
<dbReference type="GO" id="GO:0005643">
    <property type="term" value="C:nuclear pore"/>
    <property type="evidence" value="ECO:0007669"/>
    <property type="project" value="UniProtKB-SubCell"/>
</dbReference>
<dbReference type="GO" id="GO:0045505">
    <property type="term" value="F:dynein intermediate chain binding"/>
    <property type="evidence" value="ECO:0007669"/>
    <property type="project" value="TreeGrafter"/>
</dbReference>
<dbReference type="GO" id="GO:0007017">
    <property type="term" value="P:microtubule-based process"/>
    <property type="evidence" value="ECO:0007669"/>
    <property type="project" value="InterPro"/>
</dbReference>
<dbReference type="GO" id="GO:0051028">
    <property type="term" value="P:mRNA transport"/>
    <property type="evidence" value="ECO:0007669"/>
    <property type="project" value="UniProtKB-KW"/>
</dbReference>
<dbReference type="GO" id="GO:0015031">
    <property type="term" value="P:protein transport"/>
    <property type="evidence" value="ECO:0007669"/>
    <property type="project" value="UniProtKB-KW"/>
</dbReference>
<dbReference type="CDD" id="cd21452">
    <property type="entry name" value="DLC-like_DYNLL1_DYNLL2"/>
    <property type="match status" value="1"/>
</dbReference>
<dbReference type="FunFam" id="3.30.740.10:FF:000005">
    <property type="entry name" value="Dynein light chain"/>
    <property type="match status" value="1"/>
</dbReference>
<dbReference type="Gene3D" id="3.30.740.10">
    <property type="entry name" value="Protein Inhibitor Of Neuronal Nitric Oxide Synthase"/>
    <property type="match status" value="1"/>
</dbReference>
<dbReference type="InterPro" id="IPR037177">
    <property type="entry name" value="DLC_sf"/>
</dbReference>
<dbReference type="InterPro" id="IPR019763">
    <property type="entry name" value="Dynein_light_1/2_CS"/>
</dbReference>
<dbReference type="InterPro" id="IPR001372">
    <property type="entry name" value="Dynein_light_chain_typ-1/2"/>
</dbReference>
<dbReference type="PANTHER" id="PTHR11886">
    <property type="entry name" value="DYNEIN LIGHT CHAIN"/>
    <property type="match status" value="1"/>
</dbReference>
<dbReference type="PANTHER" id="PTHR11886:SF35">
    <property type="entry name" value="DYNEIN LIGHT CHAIN"/>
    <property type="match status" value="1"/>
</dbReference>
<dbReference type="Pfam" id="PF01221">
    <property type="entry name" value="Dynein_light"/>
    <property type="match status" value="1"/>
</dbReference>
<dbReference type="SMART" id="SM01375">
    <property type="entry name" value="Dynein_light"/>
    <property type="match status" value="1"/>
</dbReference>
<dbReference type="SUPFAM" id="SSF54648">
    <property type="entry name" value="DLC"/>
    <property type="match status" value="1"/>
</dbReference>
<dbReference type="PROSITE" id="PS01239">
    <property type="entry name" value="DYNEIN_LIGHT_1"/>
    <property type="match status" value="1"/>
</dbReference>
<sequence length="87" mass="9942">MSKPVLKASDITDELRDEIFELSSNATANYKLEREIAAYIKKQLDVSQGETWHVIVGKNFGSYVTHEKGYFVYFYIGPLAFLVFKTA</sequence>
<comment type="function">
    <text evidence="1 2">Acts as one of several non-catalytic accessory components of the cytoplasmic dynein complex that are thought to be involved in linking dynein to cargos and to adapter proteins that regulate dynein function. Cytoplasmic dynein 1 acts as a motor for the intracellular retrograde motility of vesicles and organelles along microtubules. May play a role in changing or maintaining the spatial distribution of cytoskeletal structures (By similarity). Also a component of the nuclear pore complex (By similarity).</text>
</comment>
<comment type="subunit">
    <text evidence="2">Homodimer. Cytoplasmic dynein consists of two catalytic heavy chains (HCs) and a number of non-catalytic subunits which present intermediate chains (ICs), light intermediate chains (LICs) and light chains (LCs). Component of the nuclear pore complex (NPC). NPC constitutes the exclusive means of nucleocytoplasmic transport. NPCs allow the passive diffusion of ions and small molecules and the active, nuclear transport receptor-mediated bidirectional transport of macromolecules such as proteins, RNAs, ribonucleoparticles (RNPs), and ribosomal subunits across the nuclear envelope. Due to its 8-fold rotational symmetry, all subunits are present with 8 copies or multiples thereof.</text>
</comment>
<comment type="subcellular location">
    <subcellularLocation>
        <location evidence="2">Cytoplasm</location>
        <location evidence="2">Cytoskeleton</location>
    </subcellularLocation>
    <subcellularLocation>
        <location evidence="2">Nucleus</location>
        <location evidence="2">Nuclear pore complex</location>
    </subcellularLocation>
</comment>
<comment type="similarity">
    <text evidence="3">Belongs to the dynein light chain family.</text>
</comment>
<reference key="1">
    <citation type="journal article" date="2004" name="Nature">
        <title>Genome evolution in yeasts.</title>
        <authorList>
            <person name="Dujon B."/>
            <person name="Sherman D."/>
            <person name="Fischer G."/>
            <person name="Durrens P."/>
            <person name="Casaregola S."/>
            <person name="Lafontaine I."/>
            <person name="de Montigny J."/>
            <person name="Marck C."/>
            <person name="Neuveglise C."/>
            <person name="Talla E."/>
            <person name="Goffard N."/>
            <person name="Frangeul L."/>
            <person name="Aigle M."/>
            <person name="Anthouard V."/>
            <person name="Babour A."/>
            <person name="Barbe V."/>
            <person name="Barnay S."/>
            <person name="Blanchin S."/>
            <person name="Beckerich J.-M."/>
            <person name="Beyne E."/>
            <person name="Bleykasten C."/>
            <person name="Boisrame A."/>
            <person name="Boyer J."/>
            <person name="Cattolico L."/>
            <person name="Confanioleri F."/>
            <person name="de Daruvar A."/>
            <person name="Despons L."/>
            <person name="Fabre E."/>
            <person name="Fairhead C."/>
            <person name="Ferry-Dumazet H."/>
            <person name="Groppi A."/>
            <person name="Hantraye F."/>
            <person name="Hennequin C."/>
            <person name="Jauniaux N."/>
            <person name="Joyet P."/>
            <person name="Kachouri R."/>
            <person name="Kerrest A."/>
            <person name="Koszul R."/>
            <person name="Lemaire M."/>
            <person name="Lesur I."/>
            <person name="Ma L."/>
            <person name="Muller H."/>
            <person name="Nicaud J.-M."/>
            <person name="Nikolski M."/>
            <person name="Oztas S."/>
            <person name="Ozier-Kalogeropoulos O."/>
            <person name="Pellenz S."/>
            <person name="Potier S."/>
            <person name="Richard G.-F."/>
            <person name="Straub M.-L."/>
            <person name="Suleau A."/>
            <person name="Swennen D."/>
            <person name="Tekaia F."/>
            <person name="Wesolowski-Louvel M."/>
            <person name="Westhof E."/>
            <person name="Wirth B."/>
            <person name="Zeniou-Meyer M."/>
            <person name="Zivanovic Y."/>
            <person name="Bolotin-Fukuhara M."/>
            <person name="Thierry A."/>
            <person name="Bouchier C."/>
            <person name="Caudron B."/>
            <person name="Scarpelli C."/>
            <person name="Gaillardin C."/>
            <person name="Weissenbach J."/>
            <person name="Wincker P."/>
            <person name="Souciet J.-L."/>
        </authorList>
    </citation>
    <scope>NUCLEOTIDE SEQUENCE [LARGE SCALE GENOMIC DNA]</scope>
    <source>
        <strain>ATCC 8585 / CBS 2359 / DSM 70799 / NBRC 1267 / NRRL Y-1140 / WM37</strain>
    </source>
</reference>
<keyword id="KW-0963">Cytoplasm</keyword>
<keyword id="KW-0206">Cytoskeleton</keyword>
<keyword id="KW-0243">Dynein</keyword>
<keyword id="KW-0493">Microtubule</keyword>
<keyword id="KW-0505">Motor protein</keyword>
<keyword id="KW-0509">mRNA transport</keyword>
<keyword id="KW-0906">Nuclear pore complex</keyword>
<keyword id="KW-0539">Nucleus</keyword>
<keyword id="KW-0653">Protein transport</keyword>
<keyword id="KW-1185">Reference proteome</keyword>
<keyword id="KW-0811">Translocation</keyword>
<keyword id="KW-0813">Transport</keyword>
<proteinExistence type="inferred from homology"/>
<organism>
    <name type="scientific">Kluyveromyces lactis (strain ATCC 8585 / CBS 2359 / DSM 70799 / NBRC 1267 / NRRL Y-1140 / WM37)</name>
    <name type="common">Yeast</name>
    <name type="synonym">Candida sphaerica</name>
    <dbReference type="NCBI Taxonomy" id="284590"/>
    <lineage>
        <taxon>Eukaryota</taxon>
        <taxon>Fungi</taxon>
        <taxon>Dikarya</taxon>
        <taxon>Ascomycota</taxon>
        <taxon>Saccharomycotina</taxon>
        <taxon>Saccharomycetes</taxon>
        <taxon>Saccharomycetales</taxon>
        <taxon>Saccharomycetaceae</taxon>
        <taxon>Kluyveromyces</taxon>
    </lineage>
</organism>
<accession>Q6CWX4</accession>
<evidence type="ECO:0000250" key="1"/>
<evidence type="ECO:0000250" key="2">
    <source>
        <dbReference type="UniProtKB" id="Q02647"/>
    </source>
</evidence>
<evidence type="ECO:0000305" key="3"/>